<accession>C5FFQ7</accession>
<protein>
    <recommendedName>
        <fullName>Probable NAD(P)H-dependent D-xylose reductase xyl1</fullName>
        <shortName>XR</shortName>
        <ecNumber>1.1.1.307</ecNumber>
    </recommendedName>
</protein>
<name>XYL1_ARTOC</name>
<keyword id="KW-0119">Carbohydrate metabolism</keyword>
<keyword id="KW-0520">NAD</keyword>
<keyword id="KW-0521">NADP</keyword>
<keyword id="KW-0560">Oxidoreductase</keyword>
<keyword id="KW-1185">Reference proteome</keyword>
<keyword id="KW-0859">Xylose metabolism</keyword>
<evidence type="ECO:0000250" key="1"/>
<evidence type="ECO:0000305" key="2"/>
<dbReference type="EC" id="1.1.1.307"/>
<dbReference type="EMBL" id="DS995702">
    <property type="protein sequence ID" value="EEQ29592.1"/>
    <property type="molecule type" value="Genomic_DNA"/>
</dbReference>
<dbReference type="RefSeq" id="XP_002849477.1">
    <property type="nucleotide sequence ID" value="XM_002849431.1"/>
</dbReference>
<dbReference type="SMR" id="C5FFQ7"/>
<dbReference type="STRING" id="554155.C5FFQ7"/>
<dbReference type="GeneID" id="9223336"/>
<dbReference type="VEuPathDB" id="FungiDB:MCYG_02411"/>
<dbReference type="eggNOG" id="KOG1577">
    <property type="taxonomic scope" value="Eukaryota"/>
</dbReference>
<dbReference type="HOGENOM" id="CLU_023205_0_0_1"/>
<dbReference type="OMA" id="VHWPSEG"/>
<dbReference type="OrthoDB" id="416253at2759"/>
<dbReference type="UniPathway" id="UPA00810"/>
<dbReference type="Proteomes" id="UP000002035">
    <property type="component" value="Unassembled WGS sequence"/>
</dbReference>
<dbReference type="GO" id="GO:0032866">
    <property type="term" value="F:D-xylose reductase (NADPH) activity"/>
    <property type="evidence" value="ECO:0007669"/>
    <property type="project" value="InterPro"/>
</dbReference>
<dbReference type="GO" id="GO:0042843">
    <property type="term" value="P:D-xylose catabolic process"/>
    <property type="evidence" value="ECO:0007669"/>
    <property type="project" value="UniProtKB-UniPathway"/>
</dbReference>
<dbReference type="CDD" id="cd19115">
    <property type="entry name" value="AKR_AKR2D1"/>
    <property type="match status" value="1"/>
</dbReference>
<dbReference type="FunFam" id="3.20.20.100:FF:000007">
    <property type="entry name" value="NAD(P)H-dependent D-xylose reductase xyl1"/>
    <property type="match status" value="1"/>
</dbReference>
<dbReference type="Gene3D" id="3.20.20.100">
    <property type="entry name" value="NADP-dependent oxidoreductase domain"/>
    <property type="match status" value="1"/>
</dbReference>
<dbReference type="InterPro" id="IPR020471">
    <property type="entry name" value="AKR"/>
</dbReference>
<dbReference type="InterPro" id="IPR044487">
    <property type="entry name" value="AKR2D"/>
</dbReference>
<dbReference type="InterPro" id="IPR018170">
    <property type="entry name" value="Aldo/ket_reductase_CS"/>
</dbReference>
<dbReference type="InterPro" id="IPR023210">
    <property type="entry name" value="NADP_OxRdtase_dom"/>
</dbReference>
<dbReference type="InterPro" id="IPR036812">
    <property type="entry name" value="NADP_OxRdtase_dom_sf"/>
</dbReference>
<dbReference type="PANTHER" id="PTHR11732">
    <property type="entry name" value="ALDO/KETO REDUCTASE"/>
    <property type="match status" value="1"/>
</dbReference>
<dbReference type="Pfam" id="PF00248">
    <property type="entry name" value="Aldo_ket_red"/>
    <property type="match status" value="1"/>
</dbReference>
<dbReference type="PIRSF" id="PIRSF000097">
    <property type="entry name" value="AKR"/>
    <property type="match status" value="1"/>
</dbReference>
<dbReference type="PRINTS" id="PR00069">
    <property type="entry name" value="ALDKETRDTASE"/>
</dbReference>
<dbReference type="SUPFAM" id="SSF51430">
    <property type="entry name" value="NAD(P)-linked oxidoreductase"/>
    <property type="match status" value="1"/>
</dbReference>
<dbReference type="PROSITE" id="PS00798">
    <property type="entry name" value="ALDOKETO_REDUCTASE_1"/>
    <property type="match status" value="1"/>
</dbReference>
<dbReference type="PROSITE" id="PS00062">
    <property type="entry name" value="ALDOKETO_REDUCTASE_2"/>
    <property type="match status" value="1"/>
</dbReference>
<dbReference type="PROSITE" id="PS00063">
    <property type="entry name" value="ALDOKETO_REDUCTASE_3"/>
    <property type="match status" value="1"/>
</dbReference>
<organism>
    <name type="scientific">Arthroderma otae (strain ATCC MYA-4605 / CBS 113480)</name>
    <name type="common">Microsporum canis</name>
    <dbReference type="NCBI Taxonomy" id="554155"/>
    <lineage>
        <taxon>Eukaryota</taxon>
        <taxon>Fungi</taxon>
        <taxon>Dikarya</taxon>
        <taxon>Ascomycota</taxon>
        <taxon>Pezizomycotina</taxon>
        <taxon>Eurotiomycetes</taxon>
        <taxon>Eurotiomycetidae</taxon>
        <taxon>Onygenales</taxon>
        <taxon>Arthrodermataceae</taxon>
        <taxon>Microsporum</taxon>
    </lineage>
</organism>
<reference key="1">
    <citation type="journal article" date="2012" name="MBio">
        <title>Comparative genome analysis of Trichophyton rubrum and related dermatophytes reveals candidate genes involved in infection.</title>
        <authorList>
            <person name="Martinez D.A."/>
            <person name="Oliver B.G."/>
            <person name="Graeser Y."/>
            <person name="Goldberg J.M."/>
            <person name="Li W."/>
            <person name="Martinez-Rossi N.M."/>
            <person name="Monod M."/>
            <person name="Shelest E."/>
            <person name="Barton R.C."/>
            <person name="Birch E."/>
            <person name="Brakhage A.A."/>
            <person name="Chen Z."/>
            <person name="Gurr S.J."/>
            <person name="Heiman D."/>
            <person name="Heitman J."/>
            <person name="Kosti I."/>
            <person name="Rossi A."/>
            <person name="Saif S."/>
            <person name="Samalova M."/>
            <person name="Saunders C.W."/>
            <person name="Shea T."/>
            <person name="Summerbell R.C."/>
            <person name="Xu J."/>
            <person name="Young S."/>
            <person name="Zeng Q."/>
            <person name="Birren B.W."/>
            <person name="Cuomo C.A."/>
            <person name="White T.C."/>
        </authorList>
    </citation>
    <scope>NUCLEOTIDE SEQUENCE [LARGE SCALE GENOMIC DNA]</scope>
    <source>
        <strain>ATCC MYA-4605 / CBS 113480</strain>
    </source>
</reference>
<gene>
    <name type="primary">xyl1</name>
    <name type="ORF">MCYG_02411</name>
</gene>
<proteinExistence type="inferred from homology"/>
<feature type="chain" id="PRO_0000393504" description="Probable NAD(P)H-dependent D-xylose reductase xyl1">
    <location>
        <begin position="1"/>
        <end position="327"/>
    </location>
</feature>
<feature type="active site" description="Proton donor" evidence="1">
    <location>
        <position position="57"/>
    </location>
</feature>
<feature type="binding site" evidence="1">
    <location>
        <position position="119"/>
    </location>
    <ligand>
        <name>substrate</name>
    </ligand>
</feature>
<feature type="binding site" evidence="1">
    <location>
        <begin position="173"/>
        <end position="174"/>
    </location>
    <ligand>
        <name>NAD(+)</name>
        <dbReference type="ChEBI" id="CHEBI:57540"/>
    </ligand>
</feature>
<feature type="binding site" evidence="1">
    <location>
        <begin position="222"/>
        <end position="231"/>
    </location>
    <ligand>
        <name>NAD(+)</name>
        <dbReference type="ChEBI" id="CHEBI:57540"/>
    </ligand>
</feature>
<feature type="binding site" evidence="1">
    <location>
        <begin position="278"/>
        <end position="288"/>
    </location>
    <ligand>
        <name>NAD(+)</name>
        <dbReference type="ChEBI" id="CHEBI:57540"/>
    </ligand>
</feature>
<feature type="site" description="Lowers pKa of active site Tyr" evidence="1">
    <location>
        <position position="86"/>
    </location>
</feature>
<sequence length="327" mass="36401">MASTTPNLTAPAVKLNSGYAMPIVGFGLWKVNKETCADQVYNAIRTGYRLFDGACDYGNEVEAGKGVARAIKEGIVRREDLFIVSKLWGTFHDPEHVEPACRRQLSHWGIDYFDLFIVHFPISLKYVDPEVRYPPEWSAPGEKAESGNVPLYKTWGAMEELVDKRLARSIGISNFSPQLIMDLLRYARIRPSTLQIEHHPYLTQEGLIKYAQDEGLVVTAYSSLGPQSFIELENKAATGTTLLLEHPTIKSSAEKHGKTPAQILLRWATQRGIAVIPKSNNPDRLAQNLDATGFNLTANELRAISALDQGLRFNNPPSYGVNFPIFG</sequence>
<comment type="function">
    <text evidence="1">Catalyzes the initial reaction in the xylose utilization pathway by reducing D-xylose into xylitol. Xylose is a major component of hemicelluloses such as xylan. Most fungi utilize D-xylose via three enzymatic reactions, xylose reductase (XR), xylitol dehydrogenase (XDH), and xylulokinase, to form xylulose 5-phosphate, which enters pentose phosphate pathway (By similarity).</text>
</comment>
<comment type="catalytic activity">
    <reaction>
        <text>xylitol + NAD(+) = D-xylose + NADH + H(+)</text>
        <dbReference type="Rhea" id="RHEA:27441"/>
        <dbReference type="ChEBI" id="CHEBI:15378"/>
        <dbReference type="ChEBI" id="CHEBI:17151"/>
        <dbReference type="ChEBI" id="CHEBI:53455"/>
        <dbReference type="ChEBI" id="CHEBI:57540"/>
        <dbReference type="ChEBI" id="CHEBI:57945"/>
        <dbReference type="EC" id="1.1.1.307"/>
    </reaction>
</comment>
<comment type="catalytic activity">
    <reaction>
        <text>xylitol + NADP(+) = D-xylose + NADPH + H(+)</text>
        <dbReference type="Rhea" id="RHEA:27445"/>
        <dbReference type="ChEBI" id="CHEBI:15378"/>
        <dbReference type="ChEBI" id="CHEBI:17151"/>
        <dbReference type="ChEBI" id="CHEBI:53455"/>
        <dbReference type="ChEBI" id="CHEBI:57783"/>
        <dbReference type="ChEBI" id="CHEBI:58349"/>
        <dbReference type="EC" id="1.1.1.307"/>
    </reaction>
</comment>
<comment type="pathway">
    <text>Carbohydrate metabolism; D-xylose degradation.</text>
</comment>
<comment type="similarity">
    <text evidence="2">Belongs to the aldo/keto reductase family.</text>
</comment>